<accession>Q04HZ9</accession>
<gene>
    <name evidence="1" type="primary">dltC</name>
    <name type="ordered locus">SPD_2003</name>
</gene>
<protein>
    <recommendedName>
        <fullName evidence="1">D-alanyl carrier protein</fullName>
        <shortName evidence="1">DCP</shortName>
    </recommendedName>
    <alternativeName>
        <fullName evidence="1">D-alanine--poly(phosphoribitol) ligase subunit 2</fullName>
    </alternativeName>
</protein>
<comment type="function">
    <text evidence="1">Carrier protein involved in the D-alanylation of lipoteichoic acid (LTA). The loading of thioester-linked D-alanine onto DltC is catalyzed by D-alanine--D-alanyl carrier protein ligase DltA. The DltC-carried D-alanyl group is further transferred to cell membrane phosphatidylglycerol (PG) by forming an ester bond, probably catalyzed by DltD. D-alanylation of LTA plays an important role in modulating the properties of the cell wall in Gram-positive bacteria, influencing the net charge of the cell wall.</text>
</comment>
<comment type="pathway">
    <text evidence="1">Cell wall biogenesis; lipoteichoic acid biosynthesis.</text>
</comment>
<comment type="subcellular location">
    <subcellularLocation>
        <location evidence="1">Cytoplasm</location>
    </subcellularLocation>
</comment>
<comment type="PTM">
    <text evidence="1">4'-phosphopantetheine is transferred from CoA to a specific serine of apo-DCP.</text>
</comment>
<comment type="similarity">
    <text evidence="1">Belongs to the DltC family.</text>
</comment>
<keyword id="KW-0961">Cell wall biogenesis/degradation</keyword>
<keyword id="KW-0963">Cytoplasm</keyword>
<keyword id="KW-0596">Phosphopantetheine</keyword>
<keyword id="KW-0597">Phosphoprotein</keyword>
<keyword id="KW-1185">Reference proteome</keyword>
<dbReference type="EMBL" id="CP000410">
    <property type="protein sequence ID" value="ABJ55105.1"/>
    <property type="molecule type" value="Genomic_DNA"/>
</dbReference>
<dbReference type="RefSeq" id="WP_000351967.1">
    <property type="nucleotide sequence ID" value="NZ_JAMLJR010000007.1"/>
</dbReference>
<dbReference type="SMR" id="Q04HZ9"/>
<dbReference type="PaxDb" id="373153-SPD_2003"/>
<dbReference type="GeneID" id="93738863"/>
<dbReference type="KEGG" id="spd:SPD_2003"/>
<dbReference type="eggNOG" id="COG0236">
    <property type="taxonomic scope" value="Bacteria"/>
</dbReference>
<dbReference type="HOGENOM" id="CLU_108696_19_0_9"/>
<dbReference type="BioCyc" id="SPNE373153:G1G6V-2148-MONOMER"/>
<dbReference type="UniPathway" id="UPA00556"/>
<dbReference type="Proteomes" id="UP000001452">
    <property type="component" value="Chromosome"/>
</dbReference>
<dbReference type="GO" id="GO:0005737">
    <property type="term" value="C:cytoplasm"/>
    <property type="evidence" value="ECO:0007669"/>
    <property type="project" value="UniProtKB-SubCell"/>
</dbReference>
<dbReference type="GO" id="GO:0036370">
    <property type="term" value="F:D-alanyl carrier activity"/>
    <property type="evidence" value="ECO:0007669"/>
    <property type="project" value="UniProtKB-UniRule"/>
</dbReference>
<dbReference type="GO" id="GO:0071555">
    <property type="term" value="P:cell wall organization"/>
    <property type="evidence" value="ECO:0007669"/>
    <property type="project" value="UniProtKB-KW"/>
</dbReference>
<dbReference type="GO" id="GO:0070395">
    <property type="term" value="P:lipoteichoic acid biosynthetic process"/>
    <property type="evidence" value="ECO:0007669"/>
    <property type="project" value="UniProtKB-UniRule"/>
</dbReference>
<dbReference type="Gene3D" id="1.10.1200.10">
    <property type="entry name" value="ACP-like"/>
    <property type="match status" value="1"/>
</dbReference>
<dbReference type="HAMAP" id="MF_00565">
    <property type="entry name" value="DltC"/>
    <property type="match status" value="1"/>
</dbReference>
<dbReference type="InterPro" id="IPR036736">
    <property type="entry name" value="ACP-like_sf"/>
</dbReference>
<dbReference type="InterPro" id="IPR003230">
    <property type="entry name" value="DltC"/>
</dbReference>
<dbReference type="InterPro" id="IPR009081">
    <property type="entry name" value="PP-bd_ACP"/>
</dbReference>
<dbReference type="NCBIfam" id="TIGR01688">
    <property type="entry name" value="dltC"/>
    <property type="match status" value="1"/>
</dbReference>
<dbReference type="NCBIfam" id="NF003464">
    <property type="entry name" value="PRK05087.1"/>
    <property type="match status" value="1"/>
</dbReference>
<dbReference type="Pfam" id="PF00550">
    <property type="entry name" value="PP-binding"/>
    <property type="match status" value="1"/>
</dbReference>
<dbReference type="SUPFAM" id="SSF47336">
    <property type="entry name" value="ACP-like"/>
    <property type="match status" value="1"/>
</dbReference>
<dbReference type="PROSITE" id="PS50075">
    <property type="entry name" value="CARRIER"/>
    <property type="match status" value="1"/>
</dbReference>
<proteinExistence type="inferred from homology"/>
<sequence length="79" mass="8980">MDIKSEVIEIIDELFMEDVSDMMDEDLFDAGVLDSMGTVELIVEIENRFDIRVPVTEFGRDDWNTANKIIAGIVELQNA</sequence>
<feature type="chain" id="PRO_1000024927" description="D-alanyl carrier protein">
    <location>
        <begin position="1"/>
        <end position="79"/>
    </location>
</feature>
<feature type="domain" description="Carrier" evidence="1">
    <location>
        <begin position="1"/>
        <end position="77"/>
    </location>
</feature>
<feature type="modified residue" description="O-(pantetheine 4'-phosphoryl)serine" evidence="1">
    <location>
        <position position="35"/>
    </location>
</feature>
<organism>
    <name type="scientific">Streptococcus pneumoniae serotype 2 (strain D39 / NCTC 7466)</name>
    <dbReference type="NCBI Taxonomy" id="373153"/>
    <lineage>
        <taxon>Bacteria</taxon>
        <taxon>Bacillati</taxon>
        <taxon>Bacillota</taxon>
        <taxon>Bacilli</taxon>
        <taxon>Lactobacillales</taxon>
        <taxon>Streptococcaceae</taxon>
        <taxon>Streptococcus</taxon>
    </lineage>
</organism>
<name>DLTC_STRP2</name>
<evidence type="ECO:0000255" key="1">
    <source>
        <dbReference type="HAMAP-Rule" id="MF_00565"/>
    </source>
</evidence>
<reference key="1">
    <citation type="journal article" date="2007" name="J. Bacteriol.">
        <title>Genome sequence of Avery's virulent serotype 2 strain D39 of Streptococcus pneumoniae and comparison with that of unencapsulated laboratory strain R6.</title>
        <authorList>
            <person name="Lanie J.A."/>
            <person name="Ng W.-L."/>
            <person name="Kazmierczak K.M."/>
            <person name="Andrzejewski T.M."/>
            <person name="Davidsen T.M."/>
            <person name="Wayne K.J."/>
            <person name="Tettelin H."/>
            <person name="Glass J.I."/>
            <person name="Winkler M.E."/>
        </authorList>
    </citation>
    <scope>NUCLEOTIDE SEQUENCE [LARGE SCALE GENOMIC DNA]</scope>
    <source>
        <strain>D39 / NCTC 7466</strain>
    </source>
</reference>